<sequence length="228" mass="23189">MLNKLSAEFFGTFWLVFGGCGSAILAAAFPELGIGFLGVALAFGLTVLTMAYAVGGISGGHFNPAVSLGLTVAGRLPAKDLIPYWVAQVLGAIAAAAILYVIASGKDGFSAGGLASNGYGELSPGGYSMMAGLLIEIILTAFFIIIILGSTSSLAPAGFAPIAIGFGLTLIHLVSIPVTNTWVNPARSTGVALFADTAALSQLWLFWVAPLVGAVIGAIIWKGLLGRD</sequence>
<keyword id="KW-0997">Cell inner membrane</keyword>
<keyword id="KW-1003">Cell membrane</keyword>
<keyword id="KW-0472">Membrane</keyword>
<keyword id="KW-0677">Repeat</keyword>
<keyword id="KW-0812">Transmembrane</keyword>
<keyword id="KW-1133">Transmembrane helix</keyword>
<keyword id="KW-0813">Transport</keyword>
<gene>
    <name evidence="1" type="primary">aqpZ</name>
    <name type="ordered locus">BMEI0070</name>
</gene>
<organism>
    <name type="scientific">Brucella melitensis biotype 1 (strain ATCC 23456 / CCUG 17765 / NCTC 10094 / 16M)</name>
    <dbReference type="NCBI Taxonomy" id="224914"/>
    <lineage>
        <taxon>Bacteria</taxon>
        <taxon>Pseudomonadati</taxon>
        <taxon>Pseudomonadota</taxon>
        <taxon>Alphaproteobacteria</taxon>
        <taxon>Hyphomicrobiales</taxon>
        <taxon>Brucellaceae</taxon>
        <taxon>Brucella/Ochrobactrum group</taxon>
        <taxon>Brucella</taxon>
    </lineage>
</organism>
<protein>
    <recommendedName>
        <fullName evidence="1">Aquaporin Z</fullName>
    </recommendedName>
</protein>
<accession>Q9L772</accession>
<comment type="function">
    <text evidence="1">Channel that permits osmotically driven movement of water in both directions. It is involved in the osmoregulation and in the maintenance of cell turgor during volume expansion in rapidly growing cells. It mediates rapid entry or exit of water in response to abrupt changes in osmolarity.</text>
</comment>
<comment type="catalytic activity">
    <reaction evidence="1">
        <text>H2O(in) = H2O(out)</text>
        <dbReference type="Rhea" id="RHEA:29667"/>
        <dbReference type="ChEBI" id="CHEBI:15377"/>
    </reaction>
    <physiologicalReaction direction="left-to-right" evidence="1">
        <dbReference type="Rhea" id="RHEA:29668"/>
    </physiologicalReaction>
    <physiologicalReaction direction="right-to-left" evidence="1">
        <dbReference type="Rhea" id="RHEA:29669"/>
    </physiologicalReaction>
</comment>
<comment type="subunit">
    <text evidence="1">Homotetramer.</text>
</comment>
<comment type="subcellular location">
    <subcellularLocation>
        <location evidence="1">Cell inner membrane</location>
        <topology evidence="1">Multi-pass membrane protein</topology>
    </subcellularLocation>
</comment>
<comment type="domain">
    <text evidence="1">Aquaporins contain two tandem repeats each containing three membrane-spanning domains and a pore-forming loop with the signature motif Asn-Pro-Ala (NPA).</text>
</comment>
<comment type="similarity">
    <text evidence="1 2">Belongs to the MIP/aquaporin (TC 1.A.8) family.</text>
</comment>
<reference key="1">
    <citation type="submission" date="2000-01" db="EMBL/GenBank/DDBJ databases">
        <title>Cloning and nucleotide sequence of aquaporin gene of Brucella melitensis.</title>
        <authorList>
            <person name="Hernandez-Castro R."/>
            <person name="Verdugo-Rodriguez A."/>
            <person name="Gutierrez-Pabello J.A."/>
            <person name="Suarez-Guemes F."/>
        </authorList>
    </citation>
    <scope>NUCLEOTIDE SEQUENCE [GENOMIC DNA]</scope>
    <source>
        <strain>133</strain>
    </source>
</reference>
<reference key="2">
    <citation type="journal article" date="2002" name="Proc. Natl. Acad. Sci. U.S.A.">
        <title>The genome sequence of the facultative intracellular pathogen Brucella melitensis.</title>
        <authorList>
            <person name="DelVecchio V.G."/>
            <person name="Kapatral V."/>
            <person name="Redkar R.J."/>
            <person name="Patra G."/>
            <person name="Mujer C."/>
            <person name="Los T."/>
            <person name="Ivanova N."/>
            <person name="Anderson I."/>
            <person name="Bhattacharyya A."/>
            <person name="Lykidis A."/>
            <person name="Reznik G."/>
            <person name="Jablonski L."/>
            <person name="Larsen N."/>
            <person name="D'Souza M."/>
            <person name="Bernal A."/>
            <person name="Mazur M."/>
            <person name="Goltsman E."/>
            <person name="Selkov E."/>
            <person name="Elzer P.H."/>
            <person name="Hagius S."/>
            <person name="O'Callaghan D."/>
            <person name="Letesson J.-J."/>
            <person name="Haselkorn R."/>
            <person name="Kyrpides N.C."/>
            <person name="Overbeek R."/>
        </authorList>
    </citation>
    <scope>NUCLEOTIDE SEQUENCE [LARGE SCALE GENOMIC DNA]</scope>
    <source>
        <strain>ATCC 23456 / CCUG 17765 / NCTC 10094 / 16M</strain>
    </source>
</reference>
<evidence type="ECO:0000255" key="1">
    <source>
        <dbReference type="HAMAP-Rule" id="MF_01146"/>
    </source>
</evidence>
<evidence type="ECO:0000305" key="2"/>
<proteinExistence type="inferred from homology"/>
<feature type="chain" id="PRO_0000063985" description="Aquaporin Z">
    <location>
        <begin position="1"/>
        <end position="228"/>
    </location>
</feature>
<feature type="transmembrane region" description="Helical" evidence="1">
    <location>
        <begin position="1"/>
        <end position="21"/>
    </location>
</feature>
<feature type="transmembrane region" description="Helical" evidence="1">
    <location>
        <begin position="23"/>
        <end position="43"/>
    </location>
</feature>
<feature type="transmembrane region" description="Helical" evidence="1">
    <location>
        <begin position="82"/>
        <end position="102"/>
    </location>
</feature>
<feature type="transmembrane region" description="Helical" evidence="1">
    <location>
        <begin position="129"/>
        <end position="149"/>
    </location>
</feature>
<feature type="transmembrane region" description="Helical" evidence="1">
    <location>
        <begin position="154"/>
        <end position="174"/>
    </location>
</feature>
<feature type="transmembrane region" description="Helical" evidence="1">
    <location>
        <begin position="205"/>
        <end position="225"/>
    </location>
</feature>
<feature type="short sequence motif" description="NPA 1" evidence="1">
    <location>
        <begin position="63"/>
        <end position="65"/>
    </location>
</feature>
<feature type="short sequence motif" description="NPA 2" evidence="1">
    <location>
        <begin position="184"/>
        <end position="186"/>
    </location>
</feature>
<feature type="site" description="Involved in tetramerization or stability of the tetramer" evidence="1">
    <location>
        <position position="20"/>
    </location>
</feature>
<feature type="site" description="Selectivity filter" evidence="1">
    <location>
        <position position="43"/>
    </location>
</feature>
<feature type="site" description="Selectivity filter" evidence="1">
    <location>
        <position position="172"/>
    </location>
</feature>
<feature type="site" description="Selectivity filter" evidence="1">
    <location>
        <position position="181"/>
    </location>
</feature>
<feature type="site" description="Selectivity filter" evidence="1">
    <location>
        <position position="187"/>
    </location>
</feature>
<dbReference type="EMBL" id="AF226624">
    <property type="protein sequence ID" value="AAF36396.1"/>
    <property type="molecule type" value="Genomic_DNA"/>
</dbReference>
<dbReference type="EMBL" id="AE008917">
    <property type="protein sequence ID" value="AAL51252.1"/>
    <property type="molecule type" value="Genomic_DNA"/>
</dbReference>
<dbReference type="PIR" id="AI3260">
    <property type="entry name" value="AI3260"/>
</dbReference>
<dbReference type="RefSeq" id="WP_004684491.1">
    <property type="nucleotide sequence ID" value="NZ_GG703778.1"/>
</dbReference>
<dbReference type="SMR" id="Q9L772"/>
<dbReference type="GeneID" id="29594900"/>
<dbReference type="KEGG" id="bme:BMEI0070"/>
<dbReference type="KEGG" id="bmel:DK63_1364"/>
<dbReference type="PATRIC" id="fig|224914.52.peg.1440"/>
<dbReference type="eggNOG" id="COG0580">
    <property type="taxonomic scope" value="Bacteria"/>
</dbReference>
<dbReference type="PhylomeDB" id="Q9L772"/>
<dbReference type="Proteomes" id="UP000000419">
    <property type="component" value="Chromosome I"/>
</dbReference>
<dbReference type="GO" id="GO:0005886">
    <property type="term" value="C:plasma membrane"/>
    <property type="evidence" value="ECO:0007669"/>
    <property type="project" value="UniProtKB-SubCell"/>
</dbReference>
<dbReference type="GO" id="GO:0015250">
    <property type="term" value="F:water channel activity"/>
    <property type="evidence" value="ECO:0007669"/>
    <property type="project" value="UniProtKB-UniRule"/>
</dbReference>
<dbReference type="CDD" id="cd00333">
    <property type="entry name" value="MIP"/>
    <property type="match status" value="1"/>
</dbReference>
<dbReference type="FunFam" id="1.20.1080.10:FF:000007">
    <property type="entry name" value="Aquaporin Z"/>
    <property type="match status" value="1"/>
</dbReference>
<dbReference type="Gene3D" id="1.20.1080.10">
    <property type="entry name" value="Glycerol uptake facilitator protein"/>
    <property type="match status" value="1"/>
</dbReference>
<dbReference type="HAMAP" id="MF_01146">
    <property type="entry name" value="Aquaporin_Z"/>
    <property type="match status" value="1"/>
</dbReference>
<dbReference type="InterPro" id="IPR023271">
    <property type="entry name" value="Aquaporin-like"/>
</dbReference>
<dbReference type="InterPro" id="IPR034294">
    <property type="entry name" value="Aquaporin_transptr"/>
</dbReference>
<dbReference type="InterPro" id="IPR023743">
    <property type="entry name" value="Aquaporin_Z"/>
</dbReference>
<dbReference type="InterPro" id="IPR000425">
    <property type="entry name" value="MIP"/>
</dbReference>
<dbReference type="InterPro" id="IPR022357">
    <property type="entry name" value="MIP_CS"/>
</dbReference>
<dbReference type="NCBIfam" id="TIGR00861">
    <property type="entry name" value="MIP"/>
    <property type="match status" value="1"/>
</dbReference>
<dbReference type="NCBIfam" id="NF003838">
    <property type="entry name" value="PRK05420.1"/>
    <property type="match status" value="1"/>
</dbReference>
<dbReference type="PANTHER" id="PTHR19139">
    <property type="entry name" value="AQUAPORIN TRANSPORTER"/>
    <property type="match status" value="1"/>
</dbReference>
<dbReference type="PANTHER" id="PTHR19139:SF199">
    <property type="entry name" value="MIP17260P"/>
    <property type="match status" value="1"/>
</dbReference>
<dbReference type="Pfam" id="PF00230">
    <property type="entry name" value="MIP"/>
    <property type="match status" value="1"/>
</dbReference>
<dbReference type="PRINTS" id="PR00783">
    <property type="entry name" value="MINTRINSICP"/>
</dbReference>
<dbReference type="SUPFAM" id="SSF81338">
    <property type="entry name" value="Aquaporin-like"/>
    <property type="match status" value="1"/>
</dbReference>
<dbReference type="PROSITE" id="PS00221">
    <property type="entry name" value="MIP"/>
    <property type="match status" value="1"/>
</dbReference>
<name>AQPZ_BRUME</name>